<proteinExistence type="inferred from homology"/>
<protein>
    <recommendedName>
        <fullName evidence="1">Probable protein kinase UbiB</fullName>
        <ecNumber evidence="1">2.7.-.-</ecNumber>
    </recommendedName>
    <alternativeName>
        <fullName evidence="1">Ubiquinone biosynthesis protein UbiB</fullName>
    </alternativeName>
</protein>
<name>UBIB_VIBC1</name>
<reference key="1">
    <citation type="submission" date="2007-08" db="EMBL/GenBank/DDBJ databases">
        <authorList>
            <consortium name="The Vibrio harveyi Genome Sequencing Project"/>
            <person name="Bassler B."/>
            <person name="Clifton S.W."/>
            <person name="Fulton L."/>
            <person name="Delehaunty K."/>
            <person name="Fronick C."/>
            <person name="Harrison M."/>
            <person name="Markivic C."/>
            <person name="Fulton R."/>
            <person name="Tin-Wollam A.-M."/>
            <person name="Shah N."/>
            <person name="Pepin K."/>
            <person name="Nash W."/>
            <person name="Thiruvilangam P."/>
            <person name="Bhonagiri V."/>
            <person name="Waters C."/>
            <person name="Tu K.C."/>
            <person name="Irgon J."/>
            <person name="Wilson R.K."/>
        </authorList>
    </citation>
    <scope>NUCLEOTIDE SEQUENCE [LARGE SCALE GENOMIC DNA]</scope>
    <source>
        <strain>ATCC BAA-1116 / BB120</strain>
    </source>
</reference>
<gene>
    <name evidence="1" type="primary">ubiB</name>
    <name type="ordered locus">VIBHAR_00564</name>
</gene>
<organism>
    <name type="scientific">Vibrio campbellii (strain ATCC BAA-1116)</name>
    <dbReference type="NCBI Taxonomy" id="2902295"/>
    <lineage>
        <taxon>Bacteria</taxon>
        <taxon>Pseudomonadati</taxon>
        <taxon>Pseudomonadota</taxon>
        <taxon>Gammaproteobacteria</taxon>
        <taxon>Vibrionales</taxon>
        <taxon>Vibrionaceae</taxon>
        <taxon>Vibrio</taxon>
    </lineage>
</organism>
<dbReference type="EC" id="2.7.-.-" evidence="1"/>
<dbReference type="EMBL" id="CP000789">
    <property type="protein sequence ID" value="ABU69567.1"/>
    <property type="molecule type" value="Genomic_DNA"/>
</dbReference>
<dbReference type="RefSeq" id="WP_012126747.1">
    <property type="nucleotide sequence ID" value="NC_009783.1"/>
</dbReference>
<dbReference type="SMR" id="A7MTX4"/>
<dbReference type="KEGG" id="vha:VIBHAR_00564"/>
<dbReference type="PATRIC" id="fig|338187.25.peg.2048"/>
<dbReference type="UniPathway" id="UPA00232"/>
<dbReference type="Proteomes" id="UP000008152">
    <property type="component" value="Chromosome I"/>
</dbReference>
<dbReference type="GO" id="GO:0005886">
    <property type="term" value="C:plasma membrane"/>
    <property type="evidence" value="ECO:0007669"/>
    <property type="project" value="UniProtKB-SubCell"/>
</dbReference>
<dbReference type="GO" id="GO:0005524">
    <property type="term" value="F:ATP binding"/>
    <property type="evidence" value="ECO:0007669"/>
    <property type="project" value="UniProtKB-KW"/>
</dbReference>
<dbReference type="GO" id="GO:0004672">
    <property type="term" value="F:protein kinase activity"/>
    <property type="evidence" value="ECO:0007669"/>
    <property type="project" value="UniProtKB-UniRule"/>
</dbReference>
<dbReference type="GO" id="GO:0010795">
    <property type="term" value="P:regulation of ubiquinone biosynthetic process"/>
    <property type="evidence" value="ECO:0007669"/>
    <property type="project" value="UniProtKB-UniRule"/>
</dbReference>
<dbReference type="GO" id="GO:0006744">
    <property type="term" value="P:ubiquinone biosynthetic process"/>
    <property type="evidence" value="ECO:0007669"/>
    <property type="project" value="UniProtKB-UniPathway"/>
</dbReference>
<dbReference type="CDD" id="cd13972">
    <property type="entry name" value="UbiB"/>
    <property type="match status" value="1"/>
</dbReference>
<dbReference type="HAMAP" id="MF_00414">
    <property type="entry name" value="UbiB"/>
    <property type="match status" value="1"/>
</dbReference>
<dbReference type="InterPro" id="IPR004147">
    <property type="entry name" value="ABC1_dom"/>
</dbReference>
<dbReference type="InterPro" id="IPR011009">
    <property type="entry name" value="Kinase-like_dom_sf"/>
</dbReference>
<dbReference type="InterPro" id="IPR010232">
    <property type="entry name" value="UbiB"/>
</dbReference>
<dbReference type="InterPro" id="IPR045308">
    <property type="entry name" value="UbiB_bact"/>
</dbReference>
<dbReference type="InterPro" id="IPR050154">
    <property type="entry name" value="UbiB_kinase"/>
</dbReference>
<dbReference type="NCBIfam" id="NF003404">
    <property type="entry name" value="PRK04750.1"/>
    <property type="match status" value="1"/>
</dbReference>
<dbReference type="NCBIfam" id="TIGR01982">
    <property type="entry name" value="UbiB"/>
    <property type="match status" value="1"/>
</dbReference>
<dbReference type="PANTHER" id="PTHR10566">
    <property type="entry name" value="CHAPERONE-ACTIVITY OF BC1 COMPLEX CABC1 -RELATED"/>
    <property type="match status" value="1"/>
</dbReference>
<dbReference type="PANTHER" id="PTHR10566:SF113">
    <property type="entry name" value="PROTEIN ACTIVITY OF BC1 COMPLEX KINASE 7, CHLOROPLASTIC"/>
    <property type="match status" value="1"/>
</dbReference>
<dbReference type="Pfam" id="PF03109">
    <property type="entry name" value="ABC1"/>
    <property type="match status" value="1"/>
</dbReference>
<dbReference type="SUPFAM" id="SSF56112">
    <property type="entry name" value="Protein kinase-like (PK-like)"/>
    <property type="match status" value="1"/>
</dbReference>
<comment type="function">
    <text evidence="1">Is probably a protein kinase regulator of UbiI activity which is involved in aerobic coenzyme Q (ubiquinone) biosynthesis.</text>
</comment>
<comment type="pathway">
    <text>Cofactor biosynthesis; ubiquinone biosynthesis [regulation].</text>
</comment>
<comment type="subcellular location">
    <subcellularLocation>
        <location evidence="1">Cell inner membrane</location>
        <topology evidence="1">Multi-pass membrane protein</topology>
    </subcellularLocation>
</comment>
<comment type="similarity">
    <text evidence="1">Belongs to the ABC1 family. UbiB subfamily.</text>
</comment>
<keyword id="KW-0067">ATP-binding</keyword>
<keyword id="KW-0997">Cell inner membrane</keyword>
<keyword id="KW-1003">Cell membrane</keyword>
<keyword id="KW-0418">Kinase</keyword>
<keyword id="KW-0472">Membrane</keyword>
<keyword id="KW-0547">Nucleotide-binding</keyword>
<keyword id="KW-0808">Transferase</keyword>
<keyword id="KW-0812">Transmembrane</keyword>
<keyword id="KW-1133">Transmembrane helix</keyword>
<keyword id="KW-0831">Ubiquinone biosynthesis</keyword>
<sequence>MTPAEIKRLYQIIKVQLEYGLDELLPDHQLTKAPLLMRKSLFWIKNKHPEKPLGERLRLALQELGPVWIKFGQMMSTRRDLFPPHIADPLALLQDQVAPFDGQLAKEQMELALGGPLQNWFTEFDIKPLASASIAQVHTARLKDTNQEVVLKVIRPDIRPVIDSDLKLMHRMASIVAGAMPEARRLKPVEVVREYEKTLLDELDLRREAANAIQLRRNFEGSEELYVPEVFPDFSNETVMVSERIYGIQVSDIEGLEANGTNMKLLAERGVSVFFTQVFRDSFFHADMHPGNVFVKPEHPENPMWIGLDCGIVGTLNSEDKRYLAENFLAFFNRDYRRVAELHVDSGWVPADTNVDEFEFAIRIVCEPIFAKPLCEISFGHVLLNLFNTARRFNMEVQPQLVLLQKTLLYVEGLGRQLYPQLDLWETAKPFLEEWMMNQVGPQALVNAIKDRAPFWAEKLPELPELLYDSLRQGKAMNQRMDQLYQGYRHSKRQQATGKFLFGVGATLVVCSAILVDNAYEQLSIASGIAGVTFWLLSWRAYRR</sequence>
<accession>A7MTX4</accession>
<feature type="chain" id="PRO_1000050070" description="Probable protein kinase UbiB">
    <location>
        <begin position="1"/>
        <end position="544"/>
    </location>
</feature>
<feature type="transmembrane region" description="Helical" evidence="1">
    <location>
        <begin position="496"/>
        <end position="516"/>
    </location>
</feature>
<feature type="transmembrane region" description="Helical" evidence="1">
    <location>
        <begin position="519"/>
        <end position="539"/>
    </location>
</feature>
<feature type="domain" description="Protein kinase" evidence="1">
    <location>
        <begin position="123"/>
        <end position="501"/>
    </location>
</feature>
<feature type="active site" description="Proton acceptor" evidence="1">
    <location>
        <position position="287"/>
    </location>
</feature>
<feature type="binding site" evidence="1">
    <location>
        <begin position="129"/>
        <end position="137"/>
    </location>
    <ligand>
        <name>ATP</name>
        <dbReference type="ChEBI" id="CHEBI:30616"/>
    </ligand>
</feature>
<feature type="binding site" evidence="1">
    <location>
        <position position="152"/>
    </location>
    <ligand>
        <name>ATP</name>
        <dbReference type="ChEBI" id="CHEBI:30616"/>
    </ligand>
</feature>
<evidence type="ECO:0000255" key="1">
    <source>
        <dbReference type="HAMAP-Rule" id="MF_00414"/>
    </source>
</evidence>